<name>ACCA_ACIB5</name>
<feature type="chain" id="PRO_1000148721" description="Acetyl-coenzyme A carboxylase carboxyl transferase subunit alpha">
    <location>
        <begin position="1"/>
        <end position="273"/>
    </location>
</feature>
<feature type="domain" description="CoA carboxyltransferase C-terminal" evidence="2">
    <location>
        <begin position="1"/>
        <end position="244"/>
    </location>
</feature>
<keyword id="KW-0067">ATP-binding</keyword>
<keyword id="KW-0963">Cytoplasm</keyword>
<keyword id="KW-0275">Fatty acid biosynthesis</keyword>
<keyword id="KW-0276">Fatty acid metabolism</keyword>
<keyword id="KW-0444">Lipid biosynthesis</keyword>
<keyword id="KW-0443">Lipid metabolism</keyword>
<keyword id="KW-0547">Nucleotide-binding</keyword>
<keyword id="KW-0808">Transferase</keyword>
<sequence length="273" mass="29673">MKKATQSKAWTTVQIARHPERPQFLDYVGEIFTEFDALHGDRLFGDDGAMVGGLARFDGQPVMVIGQHRGRSTREKLKHNFGMCNPEGYRKSQRLLDMAERFNLPVFTFIDTMGAYPGVGAEERGQAEAIATSLAQLSSLKVPVIATVLGEGGSGGALGIGVADRVIMLSHSIYSVISPEGCASILWKTAEKAAQASEALGLTADKLQSLGIVEYVVDEGEGAHLDPERVMQNLKVVLKQALDELLPMDANERCEARYQRLMKFGSENLGMAS</sequence>
<dbReference type="EC" id="2.1.3.15" evidence="1"/>
<dbReference type="EMBL" id="CP001182">
    <property type="protein sequence ID" value="ACJ40130.1"/>
    <property type="molecule type" value="Genomic_DNA"/>
</dbReference>
<dbReference type="RefSeq" id="WP_000710403.1">
    <property type="nucleotide sequence ID" value="NC_011586.2"/>
</dbReference>
<dbReference type="SMR" id="B7I6A3"/>
<dbReference type="KEGG" id="abn:AB57_0711"/>
<dbReference type="HOGENOM" id="CLU_015486_0_2_6"/>
<dbReference type="UniPathway" id="UPA00655">
    <property type="reaction ID" value="UER00711"/>
</dbReference>
<dbReference type="Proteomes" id="UP000007094">
    <property type="component" value="Chromosome"/>
</dbReference>
<dbReference type="GO" id="GO:0009317">
    <property type="term" value="C:acetyl-CoA carboxylase complex"/>
    <property type="evidence" value="ECO:0007669"/>
    <property type="project" value="InterPro"/>
</dbReference>
<dbReference type="GO" id="GO:0003989">
    <property type="term" value="F:acetyl-CoA carboxylase activity"/>
    <property type="evidence" value="ECO:0007669"/>
    <property type="project" value="InterPro"/>
</dbReference>
<dbReference type="GO" id="GO:0005524">
    <property type="term" value="F:ATP binding"/>
    <property type="evidence" value="ECO:0007669"/>
    <property type="project" value="UniProtKB-KW"/>
</dbReference>
<dbReference type="GO" id="GO:0016743">
    <property type="term" value="F:carboxyl- or carbamoyltransferase activity"/>
    <property type="evidence" value="ECO:0007669"/>
    <property type="project" value="UniProtKB-UniRule"/>
</dbReference>
<dbReference type="GO" id="GO:0006633">
    <property type="term" value="P:fatty acid biosynthetic process"/>
    <property type="evidence" value="ECO:0007669"/>
    <property type="project" value="UniProtKB-KW"/>
</dbReference>
<dbReference type="GO" id="GO:2001295">
    <property type="term" value="P:malonyl-CoA biosynthetic process"/>
    <property type="evidence" value="ECO:0007669"/>
    <property type="project" value="UniProtKB-UniRule"/>
</dbReference>
<dbReference type="Gene3D" id="3.90.226.10">
    <property type="entry name" value="2-enoyl-CoA Hydratase, Chain A, domain 1"/>
    <property type="match status" value="1"/>
</dbReference>
<dbReference type="HAMAP" id="MF_00823">
    <property type="entry name" value="AcetylCoA_CT_alpha"/>
    <property type="match status" value="1"/>
</dbReference>
<dbReference type="InterPro" id="IPR001095">
    <property type="entry name" value="Acetyl_CoA_COase_a_su"/>
</dbReference>
<dbReference type="InterPro" id="IPR029045">
    <property type="entry name" value="ClpP/crotonase-like_dom_sf"/>
</dbReference>
<dbReference type="InterPro" id="IPR011763">
    <property type="entry name" value="COA_CT_C"/>
</dbReference>
<dbReference type="NCBIfam" id="TIGR00513">
    <property type="entry name" value="accA"/>
    <property type="match status" value="1"/>
</dbReference>
<dbReference type="NCBIfam" id="NF041504">
    <property type="entry name" value="AccA_sub"/>
    <property type="match status" value="1"/>
</dbReference>
<dbReference type="NCBIfam" id="NF004344">
    <property type="entry name" value="PRK05724.1"/>
    <property type="match status" value="1"/>
</dbReference>
<dbReference type="PANTHER" id="PTHR42853">
    <property type="entry name" value="ACETYL-COENZYME A CARBOXYLASE CARBOXYL TRANSFERASE SUBUNIT ALPHA"/>
    <property type="match status" value="1"/>
</dbReference>
<dbReference type="PANTHER" id="PTHR42853:SF3">
    <property type="entry name" value="ACETYL-COENZYME A CARBOXYLASE CARBOXYL TRANSFERASE SUBUNIT ALPHA, CHLOROPLASTIC"/>
    <property type="match status" value="1"/>
</dbReference>
<dbReference type="Pfam" id="PF03255">
    <property type="entry name" value="ACCA"/>
    <property type="match status" value="1"/>
</dbReference>
<dbReference type="PRINTS" id="PR01069">
    <property type="entry name" value="ACCCTRFRASEA"/>
</dbReference>
<dbReference type="SUPFAM" id="SSF52096">
    <property type="entry name" value="ClpP/crotonase"/>
    <property type="match status" value="1"/>
</dbReference>
<dbReference type="PROSITE" id="PS50989">
    <property type="entry name" value="COA_CT_CTER"/>
    <property type="match status" value="1"/>
</dbReference>
<reference key="1">
    <citation type="journal article" date="2008" name="J. Bacteriol.">
        <title>Comparative genome sequence analysis of multidrug-resistant Acinetobacter baumannii.</title>
        <authorList>
            <person name="Adams M.D."/>
            <person name="Goglin K."/>
            <person name="Molyneaux N."/>
            <person name="Hujer K.M."/>
            <person name="Lavender H."/>
            <person name="Jamison J.J."/>
            <person name="MacDonald I.J."/>
            <person name="Martin K.M."/>
            <person name="Russo T."/>
            <person name="Campagnari A.A."/>
            <person name="Hujer A.M."/>
            <person name="Bonomo R.A."/>
            <person name="Gill S.R."/>
        </authorList>
    </citation>
    <scope>NUCLEOTIDE SEQUENCE [LARGE SCALE GENOMIC DNA]</scope>
    <source>
        <strain>AB0057</strain>
    </source>
</reference>
<evidence type="ECO:0000255" key="1">
    <source>
        <dbReference type="HAMAP-Rule" id="MF_00823"/>
    </source>
</evidence>
<evidence type="ECO:0000255" key="2">
    <source>
        <dbReference type="PROSITE-ProRule" id="PRU01137"/>
    </source>
</evidence>
<comment type="function">
    <text evidence="1">Component of the acetyl coenzyme A carboxylase (ACC) complex. First, biotin carboxylase catalyzes the carboxylation of biotin on its carrier protein (BCCP) and then the CO(2) group is transferred by the carboxyltransferase to acetyl-CoA to form malonyl-CoA.</text>
</comment>
<comment type="catalytic activity">
    <reaction evidence="1">
        <text>N(6)-carboxybiotinyl-L-lysyl-[protein] + acetyl-CoA = N(6)-biotinyl-L-lysyl-[protein] + malonyl-CoA</text>
        <dbReference type="Rhea" id="RHEA:54728"/>
        <dbReference type="Rhea" id="RHEA-COMP:10505"/>
        <dbReference type="Rhea" id="RHEA-COMP:10506"/>
        <dbReference type="ChEBI" id="CHEBI:57288"/>
        <dbReference type="ChEBI" id="CHEBI:57384"/>
        <dbReference type="ChEBI" id="CHEBI:83144"/>
        <dbReference type="ChEBI" id="CHEBI:83145"/>
        <dbReference type="EC" id="2.1.3.15"/>
    </reaction>
</comment>
<comment type="pathway">
    <text evidence="1">Lipid metabolism; malonyl-CoA biosynthesis; malonyl-CoA from acetyl-CoA: step 1/1.</text>
</comment>
<comment type="subunit">
    <text evidence="1">Acetyl-CoA carboxylase is a heterohexamer composed of biotin carboxyl carrier protein (AccB), biotin carboxylase (AccC) and two subunits each of ACCase subunit alpha (AccA) and ACCase subunit beta (AccD).</text>
</comment>
<comment type="subcellular location">
    <subcellularLocation>
        <location evidence="1">Cytoplasm</location>
    </subcellularLocation>
</comment>
<comment type="similarity">
    <text evidence="1">Belongs to the AccA family.</text>
</comment>
<organism>
    <name type="scientific">Acinetobacter baumannii (strain AB0057)</name>
    <dbReference type="NCBI Taxonomy" id="480119"/>
    <lineage>
        <taxon>Bacteria</taxon>
        <taxon>Pseudomonadati</taxon>
        <taxon>Pseudomonadota</taxon>
        <taxon>Gammaproteobacteria</taxon>
        <taxon>Moraxellales</taxon>
        <taxon>Moraxellaceae</taxon>
        <taxon>Acinetobacter</taxon>
        <taxon>Acinetobacter calcoaceticus/baumannii complex</taxon>
    </lineage>
</organism>
<proteinExistence type="inferred from homology"/>
<accession>B7I6A3</accession>
<gene>
    <name evidence="1" type="primary">accA</name>
    <name type="ordered locus">AB57_0711</name>
</gene>
<protein>
    <recommendedName>
        <fullName evidence="1">Acetyl-coenzyme A carboxylase carboxyl transferase subunit alpha</fullName>
        <shortName evidence="1">ACCase subunit alpha</shortName>
        <shortName evidence="1">Acetyl-CoA carboxylase carboxyltransferase subunit alpha</shortName>
        <ecNumber evidence="1">2.1.3.15</ecNumber>
    </recommendedName>
</protein>